<gene>
    <name evidence="1" type="primary">rplT</name>
    <name type="ordered locus">Desal_1346</name>
</gene>
<protein>
    <recommendedName>
        <fullName evidence="1">Large ribosomal subunit protein bL20</fullName>
    </recommendedName>
    <alternativeName>
        <fullName evidence="2">50S ribosomal protein L20</fullName>
    </alternativeName>
</protein>
<evidence type="ECO:0000255" key="1">
    <source>
        <dbReference type="HAMAP-Rule" id="MF_00382"/>
    </source>
</evidence>
<evidence type="ECO:0000305" key="2"/>
<dbReference type="EMBL" id="CP001649">
    <property type="protein sequence ID" value="ACS79408.1"/>
    <property type="molecule type" value="Genomic_DNA"/>
</dbReference>
<dbReference type="RefSeq" id="WP_015851226.1">
    <property type="nucleotide sequence ID" value="NC_012881.1"/>
</dbReference>
<dbReference type="SMR" id="C6BRG8"/>
<dbReference type="STRING" id="526222.Desal_1346"/>
<dbReference type="KEGG" id="dsa:Desal_1346"/>
<dbReference type="eggNOG" id="COG0292">
    <property type="taxonomic scope" value="Bacteria"/>
</dbReference>
<dbReference type="HOGENOM" id="CLU_123265_0_1_7"/>
<dbReference type="OrthoDB" id="9808966at2"/>
<dbReference type="Proteomes" id="UP000002601">
    <property type="component" value="Chromosome"/>
</dbReference>
<dbReference type="GO" id="GO:1990904">
    <property type="term" value="C:ribonucleoprotein complex"/>
    <property type="evidence" value="ECO:0007669"/>
    <property type="project" value="UniProtKB-KW"/>
</dbReference>
<dbReference type="GO" id="GO:0005840">
    <property type="term" value="C:ribosome"/>
    <property type="evidence" value="ECO:0007669"/>
    <property type="project" value="UniProtKB-KW"/>
</dbReference>
<dbReference type="GO" id="GO:0019843">
    <property type="term" value="F:rRNA binding"/>
    <property type="evidence" value="ECO:0007669"/>
    <property type="project" value="UniProtKB-UniRule"/>
</dbReference>
<dbReference type="GO" id="GO:0003735">
    <property type="term" value="F:structural constituent of ribosome"/>
    <property type="evidence" value="ECO:0007669"/>
    <property type="project" value="InterPro"/>
</dbReference>
<dbReference type="GO" id="GO:0000027">
    <property type="term" value="P:ribosomal large subunit assembly"/>
    <property type="evidence" value="ECO:0007669"/>
    <property type="project" value="UniProtKB-UniRule"/>
</dbReference>
<dbReference type="GO" id="GO:0006412">
    <property type="term" value="P:translation"/>
    <property type="evidence" value="ECO:0007669"/>
    <property type="project" value="InterPro"/>
</dbReference>
<dbReference type="CDD" id="cd07026">
    <property type="entry name" value="Ribosomal_L20"/>
    <property type="match status" value="1"/>
</dbReference>
<dbReference type="FunFam" id="1.10.1900.20:FF:000001">
    <property type="entry name" value="50S ribosomal protein L20"/>
    <property type="match status" value="1"/>
</dbReference>
<dbReference type="Gene3D" id="6.10.160.10">
    <property type="match status" value="1"/>
</dbReference>
<dbReference type="Gene3D" id="1.10.1900.20">
    <property type="entry name" value="Ribosomal protein L20"/>
    <property type="match status" value="1"/>
</dbReference>
<dbReference type="HAMAP" id="MF_00382">
    <property type="entry name" value="Ribosomal_bL20"/>
    <property type="match status" value="1"/>
</dbReference>
<dbReference type="InterPro" id="IPR005813">
    <property type="entry name" value="Ribosomal_bL20"/>
</dbReference>
<dbReference type="InterPro" id="IPR049946">
    <property type="entry name" value="RIBOSOMAL_L20_CS"/>
</dbReference>
<dbReference type="InterPro" id="IPR035566">
    <property type="entry name" value="Ribosomal_protein_bL20_C"/>
</dbReference>
<dbReference type="NCBIfam" id="TIGR01032">
    <property type="entry name" value="rplT_bact"/>
    <property type="match status" value="1"/>
</dbReference>
<dbReference type="PANTHER" id="PTHR10986">
    <property type="entry name" value="39S RIBOSOMAL PROTEIN L20"/>
    <property type="match status" value="1"/>
</dbReference>
<dbReference type="Pfam" id="PF00453">
    <property type="entry name" value="Ribosomal_L20"/>
    <property type="match status" value="1"/>
</dbReference>
<dbReference type="PRINTS" id="PR00062">
    <property type="entry name" value="RIBOSOMALL20"/>
</dbReference>
<dbReference type="SUPFAM" id="SSF74731">
    <property type="entry name" value="Ribosomal protein L20"/>
    <property type="match status" value="1"/>
</dbReference>
<dbReference type="PROSITE" id="PS00937">
    <property type="entry name" value="RIBOSOMAL_L20"/>
    <property type="match status" value="1"/>
</dbReference>
<organism>
    <name type="scientific">Maridesulfovibrio salexigens (strain ATCC 14822 / DSM 2638 / NCIMB 8403 / VKM B-1763)</name>
    <name type="common">Desulfovibrio salexigens</name>
    <dbReference type="NCBI Taxonomy" id="526222"/>
    <lineage>
        <taxon>Bacteria</taxon>
        <taxon>Pseudomonadati</taxon>
        <taxon>Thermodesulfobacteriota</taxon>
        <taxon>Desulfovibrionia</taxon>
        <taxon>Desulfovibrionales</taxon>
        <taxon>Desulfovibrionaceae</taxon>
        <taxon>Maridesulfovibrio</taxon>
    </lineage>
</organism>
<reference key="1">
    <citation type="submission" date="2009-06" db="EMBL/GenBank/DDBJ databases">
        <title>Complete sequence of Desulfovibrio salexigens DSM 2638.</title>
        <authorList>
            <consortium name="US DOE Joint Genome Institute"/>
            <person name="Lucas S."/>
            <person name="Copeland A."/>
            <person name="Lapidus A."/>
            <person name="Glavina del Rio T."/>
            <person name="Tice H."/>
            <person name="Bruce D."/>
            <person name="Goodwin L."/>
            <person name="Pitluck S."/>
            <person name="Munk A.C."/>
            <person name="Brettin T."/>
            <person name="Detter J.C."/>
            <person name="Han C."/>
            <person name="Tapia R."/>
            <person name="Larimer F."/>
            <person name="Land M."/>
            <person name="Hauser L."/>
            <person name="Kyrpides N."/>
            <person name="Anderson I."/>
            <person name="Wall J.D."/>
            <person name="Arkin A.P."/>
            <person name="Dehal P."/>
            <person name="Chivian D."/>
            <person name="Giles B."/>
            <person name="Hazen T.C."/>
        </authorList>
    </citation>
    <scope>NUCLEOTIDE SEQUENCE [LARGE SCALE GENOMIC DNA]</scope>
    <source>
        <strain>ATCC 14822 / DSM 2638 / NCIMB 8403 / VKM B-1763</strain>
    </source>
</reference>
<keyword id="KW-1185">Reference proteome</keyword>
<keyword id="KW-0687">Ribonucleoprotein</keyword>
<keyword id="KW-0689">Ribosomal protein</keyword>
<keyword id="KW-0694">RNA-binding</keyword>
<keyword id="KW-0699">rRNA-binding</keyword>
<feature type="chain" id="PRO_1000205707" description="Large ribosomal subunit protein bL20">
    <location>
        <begin position="1"/>
        <end position="117"/>
    </location>
</feature>
<proteinExistence type="inferred from homology"/>
<comment type="function">
    <text evidence="1">Binds directly to 23S ribosomal RNA and is necessary for the in vitro assembly process of the 50S ribosomal subunit. It is not involved in the protein synthesizing functions of that subunit.</text>
</comment>
<comment type="similarity">
    <text evidence="1">Belongs to the bacterial ribosomal protein bL20 family.</text>
</comment>
<sequence length="117" mass="13217">MRVKRGVAAKRRHKKYLKMAKGFRGSGSTLYRTARERVERSLCMAYVGRKLRKRDMRKLWIQRINAAARLNGMSYSRLIHGLSTAGVTLNRKVLADLAVNDAPAFAKVVEIAKAQVS</sequence>
<accession>C6BRG8</accession>
<name>RL20_MARSD</name>